<reference key="1">
    <citation type="journal article" date="1987" name="Nucleic Acids Res.">
        <title>Polymorphisms on the right arm of yeast chromosome III associated with Ty transposition and recombination events.</title>
        <authorList>
            <person name="Warmington J.R."/>
            <person name="Green R.P."/>
            <person name="Newlon C.S."/>
            <person name="Oliver S.G."/>
        </authorList>
    </citation>
    <scope>NUCLEOTIDE SEQUENCE [GENOMIC DNA]</scope>
    <source>
        <strain>CN31C</strain>
        <strain>S288c / GRF88</strain>
    </source>
</reference>
<reference key="2">
    <citation type="journal article" date="1992" name="Nature">
        <title>The complete DNA sequence of yeast chromosome III.</title>
        <authorList>
            <person name="Oliver S.G."/>
            <person name="van der Aart Q.J.M."/>
            <person name="Agostoni-Carbone M.L."/>
            <person name="Aigle M."/>
            <person name="Alberghina L."/>
            <person name="Alexandraki D."/>
            <person name="Antoine G."/>
            <person name="Anwar R."/>
            <person name="Ballesta J.P.G."/>
            <person name="Benit P."/>
            <person name="Berben G."/>
            <person name="Bergantino E."/>
            <person name="Biteau N."/>
            <person name="Bolle P.-A."/>
            <person name="Bolotin-Fukuhara M."/>
            <person name="Brown A."/>
            <person name="Brown A.J.P."/>
            <person name="Buhler J.-M."/>
            <person name="Carcano C."/>
            <person name="Carignani G."/>
            <person name="Cederberg H."/>
            <person name="Chanet R."/>
            <person name="Contreras R."/>
            <person name="Crouzet M."/>
            <person name="Daignan-Fornier B."/>
            <person name="Defoor E."/>
            <person name="Delgado M.D."/>
            <person name="Demolder J."/>
            <person name="Doira C."/>
            <person name="Dubois E."/>
            <person name="Dujon B."/>
            <person name="Duesterhoeft A."/>
            <person name="Erdmann D."/>
            <person name="Esteban M."/>
            <person name="Fabre F."/>
            <person name="Fairhead C."/>
            <person name="Faye G."/>
            <person name="Feldmann H."/>
            <person name="Fiers W."/>
            <person name="Francingues-Gaillard M.-C."/>
            <person name="Franco L."/>
            <person name="Frontali L."/>
            <person name="Fukuhara H."/>
            <person name="Fuller L.J."/>
            <person name="Galland P."/>
            <person name="Gent M.E."/>
            <person name="Gigot D."/>
            <person name="Gilliquet V."/>
            <person name="Glansdorff N."/>
            <person name="Goffeau A."/>
            <person name="Grenson M."/>
            <person name="Grisanti P."/>
            <person name="Grivell L.A."/>
            <person name="de Haan M."/>
            <person name="Haasemann M."/>
            <person name="Hatat D."/>
            <person name="Hoenicka J."/>
            <person name="Hegemann J.H."/>
            <person name="Herbert C.J."/>
            <person name="Hilger F."/>
            <person name="Hohmann S."/>
            <person name="Hollenberg C.P."/>
            <person name="Huse K."/>
            <person name="Iborra F."/>
            <person name="Indge K.J."/>
            <person name="Isono K."/>
            <person name="Jacq C."/>
            <person name="Jacquet M."/>
            <person name="James C.M."/>
            <person name="Jauniaux J.-C."/>
            <person name="Jia Y."/>
            <person name="Jimenez A."/>
            <person name="Kelly A."/>
            <person name="Kleinhans U."/>
            <person name="Kreisl P."/>
            <person name="Lanfranchi G."/>
            <person name="Lewis C."/>
            <person name="van der Linden C.G."/>
            <person name="Lucchini G."/>
            <person name="Lutzenkirchen K."/>
            <person name="Maat M.J."/>
            <person name="Mallet L."/>
            <person name="Mannhaupt G."/>
            <person name="Martegani E."/>
            <person name="Mathieu A."/>
            <person name="Maurer C.T.C."/>
            <person name="McConnell D."/>
            <person name="McKee R.A."/>
            <person name="Messenguy F."/>
            <person name="Mewes H.-W."/>
            <person name="Molemans F."/>
            <person name="Montague M.A."/>
            <person name="Muzi Falconi M."/>
            <person name="Navas L."/>
            <person name="Newlon C.S."/>
            <person name="Noone D."/>
            <person name="Pallier C."/>
            <person name="Panzeri L."/>
            <person name="Pearson B.M."/>
            <person name="Perea J."/>
            <person name="Philippsen P."/>
            <person name="Pierard A."/>
            <person name="Planta R.J."/>
            <person name="Plevani P."/>
            <person name="Poetsch B."/>
            <person name="Pohl F.M."/>
            <person name="Purnelle B."/>
            <person name="Ramezani Rad M."/>
            <person name="Rasmussen S.W."/>
            <person name="Raynal A."/>
            <person name="Remacha M.A."/>
            <person name="Richterich P."/>
            <person name="Roberts A.B."/>
            <person name="Rodriguez F."/>
            <person name="Sanz E."/>
            <person name="Schaaff-Gerstenschlaeger I."/>
            <person name="Scherens B."/>
            <person name="Schweitzer B."/>
            <person name="Shu Y."/>
            <person name="Skala J."/>
            <person name="Slonimski P.P."/>
            <person name="Sor F."/>
            <person name="Soustelle C."/>
            <person name="Spiegelberg R."/>
            <person name="Stateva L.I."/>
            <person name="Steensma H.Y."/>
            <person name="Steiner S."/>
            <person name="Thierry A."/>
            <person name="Thireos G."/>
            <person name="Tzermia M."/>
            <person name="Urrestarazu L.A."/>
            <person name="Valle G."/>
            <person name="Vetter I."/>
            <person name="van Vliet-Reedijk J.C."/>
            <person name="Voet M."/>
            <person name="Volckaert G."/>
            <person name="Vreken P."/>
            <person name="Wang H."/>
            <person name="Warmington J.R."/>
            <person name="von Wettstein D."/>
            <person name="Wicksteed B.L."/>
            <person name="Wilson C."/>
            <person name="Wurst H."/>
            <person name="Xu G."/>
            <person name="Yoshikawa A."/>
            <person name="Zimmermann F.K."/>
            <person name="Sgouros J.G."/>
        </authorList>
    </citation>
    <scope>NUCLEOTIDE SEQUENCE [LARGE SCALE GENOMIC DNA]</scope>
    <source>
        <strain>ATCC 204508 / S288c</strain>
    </source>
</reference>
<reference key="3">
    <citation type="submission" date="2001-06" db="EMBL/GenBank/DDBJ databases">
        <authorList>
            <person name="Valles G."/>
            <person name="Volckaerts G."/>
        </authorList>
    </citation>
    <scope>SEQUENCE REVISION TO 106 AND C-TERMINUS</scope>
</reference>
<reference key="4">
    <citation type="journal article" date="2014" name="G3 (Bethesda)">
        <title>The reference genome sequence of Saccharomyces cerevisiae: Then and now.</title>
        <authorList>
            <person name="Engel S.R."/>
            <person name="Dietrich F.S."/>
            <person name="Fisk D.G."/>
            <person name="Binkley G."/>
            <person name="Balakrishnan R."/>
            <person name="Costanzo M.C."/>
            <person name="Dwight S.S."/>
            <person name="Hitz B.C."/>
            <person name="Karra K."/>
            <person name="Nash R.S."/>
            <person name="Weng S."/>
            <person name="Wong E.D."/>
            <person name="Lloyd P."/>
            <person name="Skrzypek M.S."/>
            <person name="Miyasato S.R."/>
            <person name="Simison M."/>
            <person name="Cherry J.M."/>
        </authorList>
    </citation>
    <scope>GENOME REANNOTATION</scope>
    <source>
        <strain>ATCC 204508 / S288c</strain>
    </source>
</reference>
<reference key="5">
    <citation type="journal article" date="1990" name="Genetics">
        <title>SRD1, a Saccharomyces cerevisiae suppressor of the temperature-sensitive pre-rRNA processing defect of rrp1-1.</title>
        <authorList>
            <person name="Fabian G.R."/>
            <person name="Hess S.M."/>
            <person name="Hopper A.K."/>
        </authorList>
    </citation>
    <scope>FUNCTION</scope>
</reference>
<reference key="6">
    <citation type="journal article" date="1994" name="Nucleic Acids Res.">
        <title>SRD1, a S. cerevisiae gene affecting pre-rRNA processing contains a C2/C2 zinc finger motif.</title>
        <authorList>
            <person name="Hess S.M."/>
            <person name="Stanford D.R."/>
            <person name="Hopper A.K."/>
        </authorList>
    </citation>
    <scope>CHARACTERIZATION</scope>
</reference>
<reference key="7">
    <citation type="journal article" date="2003" name="Nature">
        <title>Global analysis of protein localization in budding yeast.</title>
        <authorList>
            <person name="Huh W.-K."/>
            <person name="Falvo J.V."/>
            <person name="Gerke L.C."/>
            <person name="Carroll A.S."/>
            <person name="Howson R.W."/>
            <person name="Weissman J.S."/>
            <person name="O'Shea E.K."/>
        </authorList>
    </citation>
    <scope>SUBCELLULAR LOCATION [LARGE SCALE ANALYSIS]</scope>
</reference>
<reference key="8">
    <citation type="journal article" date="2003" name="Nature">
        <title>Global analysis of protein expression in yeast.</title>
        <authorList>
            <person name="Ghaemmaghami S."/>
            <person name="Huh W.-K."/>
            <person name="Bower K."/>
            <person name="Howson R.W."/>
            <person name="Belle A."/>
            <person name="Dephoure N."/>
            <person name="O'Shea E.K."/>
            <person name="Weissman J.S."/>
        </authorList>
    </citation>
    <scope>LEVEL OF PROTEIN EXPRESSION [LARGE SCALE ANALYSIS]</scope>
</reference>
<protein>
    <recommendedName>
        <fullName>Pre-rRNA-processing protein SRD1</fullName>
    </recommendedName>
    <alternativeName>
        <fullName>Suppressor of rRNA-processing defect protein 1</fullName>
    </alternativeName>
</protein>
<keyword id="KW-0963">Cytoplasm</keyword>
<keyword id="KW-0238">DNA-binding</keyword>
<keyword id="KW-0479">Metal-binding</keyword>
<keyword id="KW-0539">Nucleus</keyword>
<keyword id="KW-1185">Reference proteome</keyword>
<keyword id="KW-0698">rRNA processing</keyword>
<keyword id="KW-0862">Zinc</keyword>
<keyword id="KW-0863">Zinc-finger</keyword>
<feature type="chain" id="PRO_0000083482" description="Pre-rRNA-processing protein SRD1">
    <location>
        <begin position="1"/>
        <end position="221"/>
    </location>
</feature>
<feature type="zinc finger region" description="GATA-type">
    <location>
        <begin position="168"/>
        <end position="193"/>
    </location>
</feature>
<feature type="region of interest" description="Disordered" evidence="1">
    <location>
        <begin position="101"/>
        <end position="121"/>
    </location>
</feature>
<feature type="region of interest" description="Disordered" evidence="1">
    <location>
        <begin position="137"/>
        <end position="161"/>
    </location>
</feature>
<feature type="region of interest" description="Disordered" evidence="1">
    <location>
        <begin position="201"/>
        <end position="221"/>
    </location>
</feature>
<feature type="compositionally biased region" description="Polar residues" evidence="1">
    <location>
        <begin position="101"/>
        <end position="110"/>
    </location>
</feature>
<feature type="compositionally biased region" description="Basic residues" evidence="1">
    <location>
        <begin position="142"/>
        <end position="155"/>
    </location>
</feature>
<feature type="compositionally biased region" description="Basic and acidic residues" evidence="1">
    <location>
        <begin position="203"/>
        <end position="221"/>
    </location>
</feature>
<feature type="sequence conflict" description="In Ref. 1; CAA29638." evidence="5" ref="1">
    <original>T</original>
    <variation>I</variation>
    <location>
        <position position="106"/>
    </location>
</feature>
<feature type="sequence conflict" description="In Ref. 1; CAA30298." evidence="5" ref="1">
    <original>P</original>
    <variation>R</variation>
    <location>
        <position position="192"/>
    </location>
</feature>
<evidence type="ECO:0000256" key="1">
    <source>
        <dbReference type="SAM" id="MobiDB-lite"/>
    </source>
</evidence>
<evidence type="ECO:0000269" key="2">
    <source>
    </source>
</evidence>
<evidence type="ECO:0000269" key="3">
    <source>
    </source>
</evidence>
<evidence type="ECO:0000269" key="4">
    <source>
    </source>
</evidence>
<evidence type="ECO:0000305" key="5"/>
<comment type="function">
    <text evidence="4">Plays a direct or indirect role in pre-rRNA processing.</text>
</comment>
<comment type="subcellular location">
    <subcellularLocation>
        <location evidence="2">Cytoplasm</location>
    </subcellularLocation>
    <subcellularLocation>
        <location evidence="2">Nucleus</location>
    </subcellularLocation>
</comment>
<comment type="miscellaneous">
    <text evidence="3">Present with 2100 molecules/cell in log phase SD medium.</text>
</comment>
<comment type="sequence caution" evidence="5">
    <conflict type="frameshift">
        <sequence resource="EMBL-CDS" id="CAA29638"/>
    </conflict>
</comment>
<organism>
    <name type="scientific">Saccharomyces cerevisiae (strain ATCC 204508 / S288c)</name>
    <name type="common">Baker's yeast</name>
    <dbReference type="NCBI Taxonomy" id="559292"/>
    <lineage>
        <taxon>Eukaryota</taxon>
        <taxon>Fungi</taxon>
        <taxon>Dikarya</taxon>
        <taxon>Ascomycota</taxon>
        <taxon>Saccharomycotina</taxon>
        <taxon>Saccharomycetes</taxon>
        <taxon>Saccharomycetales</taxon>
        <taxon>Saccharomycetaceae</taxon>
        <taxon>Saccharomyces</taxon>
    </lineage>
</organism>
<name>SRD1_YEAST</name>
<dbReference type="EMBL" id="X06322">
    <property type="protein sequence ID" value="CAA29638.1"/>
    <property type="status" value="ALT_FRAME"/>
    <property type="molecule type" value="Genomic_DNA"/>
</dbReference>
<dbReference type="EMBL" id="X07388">
    <property type="protein sequence ID" value="CAA30298.1"/>
    <property type="status" value="ALT_SEQ"/>
    <property type="molecule type" value="Genomic_DNA"/>
</dbReference>
<dbReference type="EMBL" id="X59720">
    <property type="protein sequence ID" value="CAA42309.2"/>
    <property type="molecule type" value="Genomic_DNA"/>
</dbReference>
<dbReference type="EMBL" id="BK006937">
    <property type="protein sequence ID" value="DAA07495.1"/>
    <property type="molecule type" value="Genomic_DNA"/>
</dbReference>
<dbReference type="PIR" id="S07396">
    <property type="entry name" value="S07396"/>
</dbReference>
<dbReference type="PIR" id="S19428">
    <property type="entry name" value="S19428"/>
</dbReference>
<dbReference type="RefSeq" id="NP_009944.2">
    <property type="nucleotide sequence ID" value="NM_001178731.1"/>
</dbReference>
<dbReference type="BioGRID" id="30997">
    <property type="interactions" value="10"/>
</dbReference>
<dbReference type="FunCoup" id="P09007">
    <property type="interactions" value="112"/>
</dbReference>
<dbReference type="STRING" id="4932.YCR018C"/>
<dbReference type="iPTMnet" id="P09007"/>
<dbReference type="PaxDb" id="4932-YCR018C"/>
<dbReference type="PeptideAtlas" id="P09007"/>
<dbReference type="EnsemblFungi" id="YCR018C_mRNA">
    <property type="protein sequence ID" value="YCR018C"/>
    <property type="gene ID" value="YCR018C"/>
</dbReference>
<dbReference type="GeneID" id="850377"/>
<dbReference type="KEGG" id="sce:YCR018C"/>
<dbReference type="AGR" id="SGD:S000000611"/>
<dbReference type="SGD" id="S000000611">
    <property type="gene designation" value="SRD1"/>
</dbReference>
<dbReference type="VEuPathDB" id="FungiDB:YCR018C"/>
<dbReference type="eggNOG" id="KOG1601">
    <property type="taxonomic scope" value="Eukaryota"/>
</dbReference>
<dbReference type="GeneTree" id="ENSGT00940000181677"/>
<dbReference type="HOGENOM" id="CLU_109054_0_0_1"/>
<dbReference type="InParanoid" id="P09007"/>
<dbReference type="OrthoDB" id="4044625at2759"/>
<dbReference type="BioCyc" id="YEAST:G3O-29333-MONOMER"/>
<dbReference type="BioGRID-ORCS" id="850377">
    <property type="hits" value="0 hits in 13 CRISPR screens"/>
</dbReference>
<dbReference type="PRO" id="PR:P09007"/>
<dbReference type="Proteomes" id="UP000002311">
    <property type="component" value="Chromosome III"/>
</dbReference>
<dbReference type="RNAct" id="P09007">
    <property type="molecule type" value="protein"/>
</dbReference>
<dbReference type="GO" id="GO:0005737">
    <property type="term" value="C:cytoplasm"/>
    <property type="evidence" value="ECO:0007005"/>
    <property type="project" value="SGD"/>
</dbReference>
<dbReference type="GO" id="GO:0005634">
    <property type="term" value="C:nucleus"/>
    <property type="evidence" value="ECO:0007005"/>
    <property type="project" value="SGD"/>
</dbReference>
<dbReference type="GO" id="GO:0043565">
    <property type="term" value="F:sequence-specific DNA binding"/>
    <property type="evidence" value="ECO:0007669"/>
    <property type="project" value="InterPro"/>
</dbReference>
<dbReference type="GO" id="GO:0008270">
    <property type="term" value="F:zinc ion binding"/>
    <property type="evidence" value="ECO:0007669"/>
    <property type="project" value="UniProtKB-KW"/>
</dbReference>
<dbReference type="GO" id="GO:0006355">
    <property type="term" value="P:regulation of DNA-templated transcription"/>
    <property type="evidence" value="ECO:0007669"/>
    <property type="project" value="InterPro"/>
</dbReference>
<dbReference type="GO" id="GO:0006364">
    <property type="term" value="P:rRNA processing"/>
    <property type="evidence" value="ECO:0000316"/>
    <property type="project" value="SGD"/>
</dbReference>
<dbReference type="Gene3D" id="3.30.50.10">
    <property type="entry name" value="Erythroid Transcription Factor GATA-1, subunit A"/>
    <property type="match status" value="1"/>
</dbReference>
<dbReference type="InterPro" id="IPR000679">
    <property type="entry name" value="Znf_GATA"/>
</dbReference>
<dbReference type="InterPro" id="IPR013088">
    <property type="entry name" value="Znf_NHR/GATA"/>
</dbReference>
<dbReference type="Pfam" id="PF00320">
    <property type="entry name" value="GATA"/>
    <property type="match status" value="1"/>
</dbReference>
<dbReference type="SMART" id="SM00401">
    <property type="entry name" value="ZnF_GATA"/>
    <property type="match status" value="1"/>
</dbReference>
<dbReference type="SUPFAM" id="SSF57716">
    <property type="entry name" value="Glucocorticoid receptor-like (DNA-binding domain)"/>
    <property type="match status" value="1"/>
</dbReference>
<gene>
    <name type="primary">SRD1</name>
    <name type="ordered locus">YCR018C</name>
    <name type="ORF">YCR18C</name>
</gene>
<accession>P09007</accession>
<accession>D6VR26</accession>
<accession>P09008</accession>
<accession>Q06989</accession>
<sequence>MRYNNYDNSGSSFLTRVVKKSDMEKTLLLNREIDDWKSNDKKKAYKERGRVYASCSFIEVSFSQIRAVDVEKKIENAEQLRDLTRNIVKNKTSSLNEITPSKNRVTSACNSERRTTSQEANNLEGYHSCAQGTSRSASITKKYSKKTTSRPKREKRQTILPNGEIKECSKCKDTWTIQWRSGPDQNRELCSPCGLAYGKRLKKENEKKRQAADKRIDRNNP</sequence>
<proteinExistence type="evidence at protein level"/>